<evidence type="ECO:0000250" key="1"/>
<evidence type="ECO:0000255" key="2"/>
<evidence type="ECO:0000305" key="3"/>
<keyword id="KW-0067">ATP-binding</keyword>
<keyword id="KW-0963">Cytoplasm</keyword>
<keyword id="KW-0227">DNA damage</keyword>
<keyword id="KW-0234">DNA repair</keyword>
<keyword id="KW-0235">DNA replication</keyword>
<keyword id="KW-0238">DNA-binding</keyword>
<keyword id="KW-0547">Nucleotide-binding</keyword>
<keyword id="KW-0742">SOS response</keyword>
<gene>
    <name type="primary">recF</name>
</gene>
<reference key="1">
    <citation type="journal article" date="1996" name="Mol. Microbiol.">
        <title>Organization of the origins of replication of the chromosomes of Mycobacterium smegmatis, Mycobacterium leprae and Mycobacterium tuberculosis and isolation of a functional origin from M. smegmatis.</title>
        <authorList>
            <person name="Salazar L."/>
            <person name="Fsihi H."/>
            <person name="De Rossi E."/>
            <person name="Riccardi G."/>
            <person name="Rios C."/>
            <person name="Cole S.T."/>
            <person name="Takiff H.E."/>
        </authorList>
    </citation>
    <scope>NUCLEOTIDE SEQUENCE [GENOMIC DNA]</scope>
    <source>
        <strain>ATCC 607 / DSM 43465 / JCM 20379 / NBRC 3207 / NRRL B-692</strain>
    </source>
</reference>
<comment type="function">
    <text evidence="1">The RecF protein is involved in DNA metabolism; it is required for DNA replication and normal SOS inducibility. RecF binds preferentially to single-stranded, linear DNA. It also seems to bind ATP (By similarity).</text>
</comment>
<comment type="subcellular location">
    <subcellularLocation>
        <location evidence="1">Cytoplasm</location>
    </subcellularLocation>
</comment>
<comment type="similarity">
    <text evidence="3">Belongs to the RecF family.</text>
</comment>
<proteinExistence type="inferred from homology"/>
<name>RECF_MYCSM</name>
<feature type="chain" id="PRO_0000196434" description="DNA replication and repair protein RecF">
    <location>
        <begin position="1"/>
        <end position="384"/>
    </location>
</feature>
<feature type="binding site" evidence="2">
    <location>
        <begin position="30"/>
        <end position="37"/>
    </location>
    <ligand>
        <name>ATP</name>
        <dbReference type="ChEBI" id="CHEBI:30616"/>
    </ligand>
</feature>
<protein>
    <recommendedName>
        <fullName>DNA replication and repair protein RecF</fullName>
    </recommendedName>
</protein>
<accession>P0C561</accession>
<accession>P50916</accession>
<organism>
    <name type="scientific">Mycolicibacterium smegmatis</name>
    <name type="common">Mycobacterium smegmatis</name>
    <dbReference type="NCBI Taxonomy" id="1772"/>
    <lineage>
        <taxon>Bacteria</taxon>
        <taxon>Bacillati</taxon>
        <taxon>Actinomycetota</taxon>
        <taxon>Actinomycetes</taxon>
        <taxon>Mycobacteriales</taxon>
        <taxon>Mycobacteriaceae</taxon>
        <taxon>Mycolicibacterium</taxon>
    </lineage>
</organism>
<dbReference type="EMBL" id="X92503">
    <property type="protein sequence ID" value="CAA63251.1"/>
    <property type="molecule type" value="Genomic_DNA"/>
</dbReference>
<dbReference type="PIR" id="S70989">
    <property type="entry name" value="S70989"/>
</dbReference>
<dbReference type="RefSeq" id="WP_011726603.1">
    <property type="nucleotide sequence ID" value="NZ_SIUA01000001.1"/>
</dbReference>
<dbReference type="SMR" id="P0C561"/>
<dbReference type="GeneID" id="93454930"/>
<dbReference type="OMA" id="GESWSYA"/>
<dbReference type="GO" id="GO:0005737">
    <property type="term" value="C:cytoplasm"/>
    <property type="evidence" value="ECO:0007669"/>
    <property type="project" value="UniProtKB-SubCell"/>
</dbReference>
<dbReference type="GO" id="GO:0005524">
    <property type="term" value="F:ATP binding"/>
    <property type="evidence" value="ECO:0007669"/>
    <property type="project" value="UniProtKB-UniRule"/>
</dbReference>
<dbReference type="GO" id="GO:0003697">
    <property type="term" value="F:single-stranded DNA binding"/>
    <property type="evidence" value="ECO:0007669"/>
    <property type="project" value="UniProtKB-UniRule"/>
</dbReference>
<dbReference type="GO" id="GO:0006260">
    <property type="term" value="P:DNA replication"/>
    <property type="evidence" value="ECO:0007669"/>
    <property type="project" value="UniProtKB-UniRule"/>
</dbReference>
<dbReference type="GO" id="GO:0000731">
    <property type="term" value="P:DNA synthesis involved in DNA repair"/>
    <property type="evidence" value="ECO:0007669"/>
    <property type="project" value="TreeGrafter"/>
</dbReference>
<dbReference type="GO" id="GO:0006302">
    <property type="term" value="P:double-strand break repair"/>
    <property type="evidence" value="ECO:0007669"/>
    <property type="project" value="TreeGrafter"/>
</dbReference>
<dbReference type="GO" id="GO:0009432">
    <property type="term" value="P:SOS response"/>
    <property type="evidence" value="ECO:0007669"/>
    <property type="project" value="UniProtKB-UniRule"/>
</dbReference>
<dbReference type="CDD" id="cd03242">
    <property type="entry name" value="ABC_RecF"/>
    <property type="match status" value="1"/>
</dbReference>
<dbReference type="Gene3D" id="3.40.50.300">
    <property type="entry name" value="P-loop containing nucleotide triphosphate hydrolases"/>
    <property type="match status" value="1"/>
</dbReference>
<dbReference type="Gene3D" id="1.20.1050.90">
    <property type="entry name" value="RecF/RecN/SMC, N-terminal domain"/>
    <property type="match status" value="1"/>
</dbReference>
<dbReference type="HAMAP" id="MF_00365">
    <property type="entry name" value="RecF"/>
    <property type="match status" value="1"/>
</dbReference>
<dbReference type="InterPro" id="IPR001238">
    <property type="entry name" value="DNA-binding_RecF"/>
</dbReference>
<dbReference type="InterPro" id="IPR018078">
    <property type="entry name" value="DNA-binding_RecF_CS"/>
</dbReference>
<dbReference type="InterPro" id="IPR027417">
    <property type="entry name" value="P-loop_NTPase"/>
</dbReference>
<dbReference type="InterPro" id="IPR003395">
    <property type="entry name" value="RecF/RecN/SMC_N"/>
</dbReference>
<dbReference type="InterPro" id="IPR042174">
    <property type="entry name" value="RecF_2"/>
</dbReference>
<dbReference type="NCBIfam" id="TIGR00611">
    <property type="entry name" value="recf"/>
    <property type="match status" value="1"/>
</dbReference>
<dbReference type="PANTHER" id="PTHR32182">
    <property type="entry name" value="DNA REPLICATION AND REPAIR PROTEIN RECF"/>
    <property type="match status" value="1"/>
</dbReference>
<dbReference type="PANTHER" id="PTHR32182:SF0">
    <property type="entry name" value="DNA REPLICATION AND REPAIR PROTEIN RECF"/>
    <property type="match status" value="1"/>
</dbReference>
<dbReference type="Pfam" id="PF02463">
    <property type="entry name" value="SMC_N"/>
    <property type="match status" value="1"/>
</dbReference>
<dbReference type="SUPFAM" id="SSF52540">
    <property type="entry name" value="P-loop containing nucleoside triphosphate hydrolases"/>
    <property type="match status" value="1"/>
</dbReference>
<dbReference type="PROSITE" id="PS00617">
    <property type="entry name" value="RECF_1"/>
    <property type="match status" value="1"/>
</dbReference>
<dbReference type="PROSITE" id="PS00618">
    <property type="entry name" value="RECF_2"/>
    <property type="match status" value="1"/>
</dbReference>
<sequence length="384" mass="41920">MFARHLGLTDFRSWARVDLDLEPGRTVFVGPNGFGKTNLVEALWYSATLGSHRVATDAPLIRAGAERAIVSTIVVNEGRELAVDLEITSGRANKARLNRSPVRSAREILGVLRAVLFSPEDLSLVRGDPGDRRRYLDELATTRRPALAGVRADYDKVVRQRTALLKTAAGARYRGDRSVIDTLEVWDGHLAAHGAALVASRVKLVEELQPEVEKAYQLLAPASRPAAIRYRSSVEAIEDAPGPESVEFYEAALLDALARRRDAELERGVCLVGPHRDDLELRLGDQPAKGFASHGESWSMALALRLGAYELLCSDGVEPVLLLDDVFAELDTSRRRALATVAGSAEQVLVTAAVGEDIPEDWDARRVEIRMVEDDGGRVSMVAS</sequence>